<protein>
    <recommendedName>
        <fullName evidence="1 10">Na(+)-translocating NADH-quinone reductase subunit C</fullName>
        <shortName evidence="1">Na(+)-NQR subunit C</shortName>
        <shortName evidence="1">Na(+)-translocating NQR subunit C</shortName>
        <ecNumber evidence="1 7">7.2.1.1</ecNumber>
    </recommendedName>
    <alternativeName>
        <fullName evidence="1">NQR complex subunit C</fullName>
    </alternativeName>
    <alternativeName>
        <fullName evidence="1">NQR-1 subunit C</fullName>
    </alternativeName>
</protein>
<dbReference type="EC" id="7.2.1.1" evidence="1 7"/>
<dbReference type="EMBL" id="Z37111">
    <property type="protein sequence ID" value="CAA85478.1"/>
    <property type="molecule type" value="Genomic_DNA"/>
</dbReference>
<dbReference type="EMBL" id="AB008030">
    <property type="protein sequence ID" value="BAA22912.1"/>
    <property type="molecule type" value="Genomic_DNA"/>
</dbReference>
<dbReference type="PIR" id="S65528">
    <property type="entry name" value="S65528"/>
</dbReference>
<dbReference type="RefSeq" id="WP_006742550.1">
    <property type="nucleotide sequence ID" value="NZ_JBBLMY010000003.1"/>
</dbReference>
<dbReference type="SMR" id="Q56582"/>
<dbReference type="STRING" id="663.BAU10_10830"/>
<dbReference type="TCDB" id="3.D.5.1.1">
    <property type="family name" value="the na(+)-translocating nadh:quinone dehydrogenase (na-ndh or nqr) family"/>
</dbReference>
<dbReference type="eggNOG" id="COG2869">
    <property type="taxonomic scope" value="Bacteria"/>
</dbReference>
<dbReference type="GO" id="GO:0005886">
    <property type="term" value="C:plasma membrane"/>
    <property type="evidence" value="ECO:0007669"/>
    <property type="project" value="UniProtKB-SubCell"/>
</dbReference>
<dbReference type="GO" id="GO:0010181">
    <property type="term" value="F:FMN binding"/>
    <property type="evidence" value="ECO:0000314"/>
    <property type="project" value="UniProtKB"/>
</dbReference>
<dbReference type="GO" id="GO:0016655">
    <property type="term" value="F:oxidoreductase activity, acting on NAD(P)H, quinone or similar compound as acceptor"/>
    <property type="evidence" value="ECO:0000314"/>
    <property type="project" value="UniProtKB"/>
</dbReference>
<dbReference type="GO" id="GO:0006814">
    <property type="term" value="P:sodium ion transport"/>
    <property type="evidence" value="ECO:0007669"/>
    <property type="project" value="UniProtKB-UniRule"/>
</dbReference>
<dbReference type="HAMAP" id="MF_00427">
    <property type="entry name" value="NqrC"/>
    <property type="match status" value="1"/>
</dbReference>
<dbReference type="InterPro" id="IPR007329">
    <property type="entry name" value="FMN-bd"/>
</dbReference>
<dbReference type="InterPro" id="IPR010204">
    <property type="entry name" value="NqrC"/>
</dbReference>
<dbReference type="NCBIfam" id="TIGR01938">
    <property type="entry name" value="nqrC"/>
    <property type="match status" value="1"/>
</dbReference>
<dbReference type="NCBIfam" id="NF003746">
    <property type="entry name" value="PRK05346.1-1"/>
    <property type="match status" value="1"/>
</dbReference>
<dbReference type="NCBIfam" id="NF003749">
    <property type="entry name" value="PRK05346.1-5"/>
    <property type="match status" value="1"/>
</dbReference>
<dbReference type="PANTHER" id="PTHR37838">
    <property type="entry name" value="NA(+)-TRANSLOCATING NADH-QUINONE REDUCTASE SUBUNIT C"/>
    <property type="match status" value="1"/>
</dbReference>
<dbReference type="PANTHER" id="PTHR37838:SF1">
    <property type="entry name" value="NA(+)-TRANSLOCATING NADH-QUINONE REDUCTASE SUBUNIT C"/>
    <property type="match status" value="1"/>
</dbReference>
<dbReference type="Pfam" id="PF04205">
    <property type="entry name" value="FMN_bind"/>
    <property type="match status" value="1"/>
</dbReference>
<dbReference type="PIRSF" id="PIRSF009437">
    <property type="entry name" value="NQR-1_subunit_C"/>
    <property type="match status" value="1"/>
</dbReference>
<dbReference type="SMART" id="SM00900">
    <property type="entry name" value="FMN_bind"/>
    <property type="match status" value="1"/>
</dbReference>
<proteinExistence type="evidence at protein level"/>
<sequence length="256" mass="27703">MASNNDSIKKTLGVVIGLSLVCSIIVSTAAVGLRDKQKANAVLDKQSKIVEVAGIDANGKKVPELFAEYIEPRLVDLETGNFTEGNASTYDQREASKDAERSIALTPEEDVADIRRRANTAVVYLVKDQDEVQKVILPMHGKGLWSMMYAFVAVETDGNTVSAITYYEQGETPGLGGEVENPSWRDQFIGKKLYNEDHQPAIKVVKGGAPQGSEHGVDGLSGATLTSNGVQHTFDFWLGDKGFGPFLAKVRDGELN</sequence>
<keyword id="KW-0997">Cell inner membrane</keyword>
<keyword id="KW-1003">Cell membrane</keyword>
<keyword id="KW-0903">Direct protein sequencing</keyword>
<keyword id="KW-0285">Flavoprotein</keyword>
<keyword id="KW-0288">FMN</keyword>
<keyword id="KW-0406">Ion transport</keyword>
<keyword id="KW-0472">Membrane</keyword>
<keyword id="KW-0520">NAD</keyword>
<keyword id="KW-0597">Phosphoprotein</keyword>
<keyword id="KW-0915">Sodium</keyword>
<keyword id="KW-0739">Sodium transport</keyword>
<keyword id="KW-1278">Translocase</keyword>
<keyword id="KW-0812">Transmembrane</keyword>
<keyword id="KW-1133">Transmembrane helix</keyword>
<keyword id="KW-0813">Transport</keyword>
<keyword id="KW-0830">Ubiquinone</keyword>
<name>NQRC_VIBAL</name>
<accession>Q56582</accession>
<accession>Q56566</accession>
<accession>Q56588</accession>
<gene>
    <name evidence="1 9" type="primary">nqrC</name>
    <name evidence="8" type="synonym">nqr3</name>
</gene>
<organism>
    <name type="scientific">Vibrio alginolyticus</name>
    <dbReference type="NCBI Taxonomy" id="663"/>
    <lineage>
        <taxon>Bacteria</taxon>
        <taxon>Pseudomonadati</taxon>
        <taxon>Pseudomonadota</taxon>
        <taxon>Gammaproteobacteria</taxon>
        <taxon>Vibrionales</taxon>
        <taxon>Vibrionaceae</taxon>
        <taxon>Vibrio</taxon>
    </lineage>
</organism>
<comment type="function">
    <text evidence="1 12 13">NQR complex catalyzes the reduction of ubiquinone-1 to ubiquinol by two successive reactions, coupled with the transport of Na(+) ions from the cytoplasm to the periplasm. NqrA to NqrE are probably involved in the second step, the conversion of ubisemiquinone to ubiquinol.</text>
</comment>
<comment type="catalytic activity">
    <reaction evidence="1 7">
        <text>a ubiquinone + n Na(+)(in) + NADH + H(+) = a ubiquinol + n Na(+)(out) + NAD(+)</text>
        <dbReference type="Rhea" id="RHEA:47748"/>
        <dbReference type="Rhea" id="RHEA-COMP:9565"/>
        <dbReference type="Rhea" id="RHEA-COMP:9566"/>
        <dbReference type="ChEBI" id="CHEBI:15378"/>
        <dbReference type="ChEBI" id="CHEBI:16389"/>
        <dbReference type="ChEBI" id="CHEBI:17976"/>
        <dbReference type="ChEBI" id="CHEBI:29101"/>
        <dbReference type="ChEBI" id="CHEBI:57540"/>
        <dbReference type="ChEBI" id="CHEBI:57945"/>
        <dbReference type="EC" id="7.2.1.1"/>
    </reaction>
</comment>
<comment type="cofactor">
    <cofactor evidence="1 3 4">
        <name>FMN</name>
        <dbReference type="ChEBI" id="CHEBI:58210"/>
    </cofactor>
</comment>
<comment type="activity regulation">
    <text evidence="2">This reaction is tightly coupled to the Na(+) pumping activity and specifically requires Na(+) for activity. Inhibited by korormicin and 2-N-heptyl-4-hydroxyquinoline N-oxide (HQNO).</text>
</comment>
<comment type="subunit">
    <text evidence="1 7">Composed of six subunits; NqrA, NqrB, NqrC, NqrD, NqrE and NqrF.</text>
</comment>
<comment type="subcellular location">
    <subcellularLocation>
        <location evidence="1 11">Cell inner membrane</location>
        <topology evidence="1">Single-pass membrane protein</topology>
    </subcellularLocation>
</comment>
<comment type="similarity">
    <text evidence="1 11">Belongs to the NqrC family.</text>
</comment>
<evidence type="ECO:0000255" key="1">
    <source>
        <dbReference type="HAMAP-Rule" id="MF_00427"/>
    </source>
</evidence>
<evidence type="ECO:0000269" key="2">
    <source>
    </source>
</evidence>
<evidence type="ECO:0000269" key="3">
    <source>
    </source>
</evidence>
<evidence type="ECO:0000269" key="4">
    <source>
    </source>
</evidence>
<evidence type="ECO:0000269" key="5">
    <source>
    </source>
</evidence>
<evidence type="ECO:0000269" key="6">
    <source>
    </source>
</evidence>
<evidence type="ECO:0000269" key="7">
    <source>
    </source>
</evidence>
<evidence type="ECO:0000303" key="8">
    <source>
    </source>
</evidence>
<evidence type="ECO:0000303" key="9">
    <source>
    </source>
</evidence>
<evidence type="ECO:0000303" key="10">
    <source>
    </source>
</evidence>
<evidence type="ECO:0000305" key="11"/>
<evidence type="ECO:0000305" key="12">
    <source>
    </source>
</evidence>
<evidence type="ECO:0000305" key="13">
    <source>
    </source>
</evidence>
<reference key="1">
    <citation type="journal article" date="1994" name="FEBS Lett.">
        <title>Cloning and sequencing of four structural genes for the Na(+)-translocating NADH-ubiquinone oxidoreductase of Vibrio alginolyticus.</title>
        <authorList>
            <person name="Beattie P."/>
            <person name="Tan K."/>
            <person name="Bourne R.M."/>
            <person name="Leach D.R.F."/>
            <person name="Rich P.R."/>
            <person name="Ward F.B."/>
        </authorList>
    </citation>
    <scope>NUCLEOTIDE SEQUENCE [GENOMIC DNA]</scope>
    <scope>PROTEIN SEQUENCE OF 2-21</scope>
    <source>
        <strain>NCIMB 11038 / LMG 3418</strain>
    </source>
</reference>
<reference key="2">
    <citation type="journal article" date="1995" name="FEBS Lett.">
        <title>Sequencing and the alignment of structural genes in the nqr operon encoding the Na(+)-translocating NADH-quinone reductase from Vibrio alginolyticus.</title>
        <authorList>
            <person name="Hayashi M."/>
            <person name="Hirai K."/>
            <person name="Unemoto T."/>
        </authorList>
    </citation>
    <scope>NUCLEOTIDE SEQUENCE [GENOMIC DNA]</scope>
</reference>
<reference key="3">
    <citation type="journal article" date="1994" name="FEBS Lett.">
        <title>Cloning of the Na(+)-translocating NADH-quinone reductase gene from the marine bacterium Vibrio alginolyticus and the expression of the beta-subunit in Escherichia coli.</title>
        <authorList>
            <person name="Hayashi M."/>
            <person name="Hirai K."/>
            <person name="Unemoto T."/>
        </authorList>
    </citation>
    <scope>PROTEIN SEQUENCE OF 2-12 AND 171-177</scope>
</reference>
<reference key="4">
    <citation type="journal article" date="1998" name="FEBS Lett.">
        <title>Identification of six subunits constituting Na+-translocating NADH-quinone reductase from the marine Vibrio alginolyticus.</title>
        <authorList>
            <person name="Nakayama Y."/>
            <person name="Hayashi M."/>
            <person name="Unemoto T."/>
        </authorList>
    </citation>
    <scope>PROTEIN SEQUENCE OF 2-11</scope>
    <scope>CATALYTIC ACTIVITY</scope>
    <scope>SUBUNIT</scope>
</reference>
<reference key="5">
    <citation type="journal article" date="2000" name="FEBS Lett.">
        <title>Covalently bound flavin in the NqrB and NqrC subunits of Na(+)-translocating NADH-quinone reductase from Vibrio alginolyticus.</title>
        <authorList>
            <person name="Nakayama Y."/>
            <person name="Yasui M."/>
            <person name="Sugahara K."/>
            <person name="Hayashi M."/>
            <person name="Unemoto T."/>
        </authorList>
    </citation>
    <scope>PROTEIN SEQUENCE OF 2-8 AND 220-229</scope>
    <scope>COFACTOR</scope>
</reference>
<reference key="6">
    <citation type="journal article" date="1999" name="Biol. Pharm. Bull.">
        <title>Inhibitor studies of a new antibiotic, korormicin, 2-n-heptyl-4-hydroxyquinoline N-oxide and Ag+ toward the Na+-translocating NADH-quinone reductase from the marine Vibrio alginolyticus.</title>
        <authorList>
            <person name="Nakayama Y."/>
            <person name="Hayashi M."/>
            <person name="Yoshikawa K."/>
            <person name="Mochida K."/>
            <person name="Unemoto T."/>
        </authorList>
    </citation>
    <scope>INHIBITION OF ENZYMATIC ACTIVITY</scope>
</reference>
<reference key="7">
    <citation type="journal article" date="2001" name="FEBS Lett.">
        <title>FMN is covalently attached to a threonine residue in the NqrB and NqrC subunits of Na(+)-translocating NADH-quinone reductase from Vibrio alginolyticus.</title>
        <authorList>
            <person name="Hayashi M."/>
            <person name="Nakayama Y."/>
            <person name="Yasui M."/>
            <person name="Maeda M."/>
            <person name="Furuishi K."/>
            <person name="Unemoto T."/>
        </authorList>
    </citation>
    <scope>COFACTOR</scope>
    <scope>PROSTHETIC GROUP AT THR-224</scope>
    <scope>IDENTIFICATION BY MASS SPECTROMETRY</scope>
</reference>
<reference key="8">
    <citation type="journal article" date="2001" name="Biochim. Biophys. Acta">
        <title>Recent progress in the Na(+)-translocating NADH-quinone reductase from the marine Vibrio alginolyticus.</title>
        <authorList>
            <person name="Hayashi M."/>
            <person name="Nakayama Y."/>
            <person name="Unemoto T."/>
        </authorList>
    </citation>
    <scope>REVIEW</scope>
</reference>
<reference key="9">
    <citation type="journal article" date="2001" name="Biochim. Biophys. Acta">
        <title>Na(+) translocation by bacterial NADH:quinone oxidoreductases: an extension to the complex-I family of primary redox pumps.</title>
        <authorList>
            <person name="Steuber J."/>
        </authorList>
    </citation>
    <scope>REVIEW</scope>
</reference>
<feature type="initiator methionine" description="Removed" evidence="3 5 6 7">
    <location>
        <position position="1"/>
    </location>
</feature>
<feature type="chain" id="PRO_0000214221" description="Na(+)-translocating NADH-quinone reductase subunit C">
    <location>
        <begin position="2"/>
        <end position="256"/>
    </location>
</feature>
<feature type="transmembrane region" description="Helical" evidence="1">
    <location>
        <begin position="12"/>
        <end position="32"/>
    </location>
</feature>
<feature type="modified residue" description="FMN phosphoryl threonine" evidence="1 4">
    <location>
        <position position="224"/>
    </location>
</feature>
<feature type="sequence conflict" description="In Ref. 1; CAA85478." evidence="11" ref="1">
    <original>W</original>
    <variation>R</variation>
    <location>
        <position position="184"/>
    </location>
</feature>